<proteinExistence type="evidence at protein level"/>
<name>TLR9_MOUSE</name>
<accession>Q9EQU3</accession>
<accession>F8VPN5</accession>
<accession>Q4L0K3</accession>
<accession>Q4L0K4</accession>
<accession>Q99MF2</accession>
<accession>Q99MQ8</accession>
<comment type="function">
    <text evidence="2 6 8 11 12 14 16 19">Key component of innate and adaptive immunity. TLRs (Toll-like receptors) control host immune response against pathogens through recognition of molecular patterns specific to microorganisms. TLR9 is a nucleotide-sensing TLR which is activated by unmethylated cytidine-phosphate-guanosine (CpG) dinucleotides (PubMed:31408613). Acts via MYD88 and TRAF6, leading to NF-kappa-B activation, cytokine secretion and the inflammatory response (PubMed:14993594, PubMed:17474149, PubMed:18820679, PubMed:18931679, PubMed:21402738, PubMed:25686612). Plays a role in defense against systemic mouse cytomegalovirus infection (PubMed:14993594). Controls lymphocyte response to Helicobacter infection (PubMed:17474149). Upon CpG stimulation, induces B-cell proliferation, activation, survival and antibody production (By similarity).</text>
</comment>
<comment type="subunit">
    <text evidence="1 2 7 10 11 12 13 15 18 19">Monomer and homodimer. Exists as a monomer in the absence of unmethylated cytidine-phosphate-guanosine (CpG) ligand. Proteolytic processing of an insertion loop (Z-loop) is required for homodimerization upon binding to the unmethylated CpG ligand leading to its activation (By similarity). Interacts with MYD88 via their respective TIR domains (PubMed:18820679). Interacts with BTK (By similarity). Interacts (via transmembrane domain) with UNC93B1 (PubMed:17452530, PubMed:18931679). Interacts with CD300LH; the interaction may promote full activation of TLR9-triggered innate responses (PubMed:21940676). Interacts with CNPY3 and HSP90B1; this interaction is required for proper folding in the endoplasmic reticulum (PubMed:18780723, PubMed:20865800). Interacts with SMPDL3B (PubMed:26095358). Interacts with CD82; this interaction is essential for TLR9-dependent myddosome formation in response to CpG stimulation (PubMed:31408613).</text>
</comment>
<comment type="interaction">
    <interactant intactId="EBI-9979528">
        <id>Q9EQU3</id>
    </interactant>
    <interactant intactId="EBI-916319">
        <id>P11507</id>
        <label>Atp2a2</label>
    </interactant>
    <organismsDiffer>true</organismsDiffer>
    <experiments>4</experiments>
</comment>
<comment type="subcellular location">
    <subcellularLocation>
        <location evidence="9 19">Endoplasmic reticulum membrane</location>
        <topology evidence="9">Single-pass type I membrane protein</topology>
    </subcellularLocation>
    <subcellularLocation>
        <location evidence="9 17">Endosome</location>
    </subcellularLocation>
    <subcellularLocation>
        <location evidence="9 11 17">Lysosome</location>
    </subcellularLocation>
    <subcellularLocation>
        <location evidence="9 11">Cytoplasmic vesicle</location>
        <location evidence="9 11">Phagosome</location>
    </subcellularLocation>
    <text evidence="9 11 12">Relocalizes from endoplasmic reticulum to endosome and lysosome upon stimulation with agonist (PubMed:18305481). Exit from the ER requires UNC93B1 (PubMed:18820679). Endolysosomal localization is required for proteolytic cleavage and subsequent activation (PubMed:18820679, PubMed:18931679). Intracellular localization of the active receptor may prevent from responding to self nucleic acid (PubMed:18820679).</text>
</comment>
<comment type="tissue specificity">
    <text evidence="8">Expressed in the basolateral region of gastric epithelial cells with high levels detected in antrum and body mucosa (at protein level). Detected in spleen and stomach at higher levels in C57BL/6 mice than BALB/C.</text>
</comment>
<comment type="induction">
    <text evidence="8">Following Helicobacter infection, down-regulated in C57BL/6 mice and up-regulated in BALB/C mice.</text>
</comment>
<comment type="PTM">
    <text evidence="11 12 14">Activated by proteolytic cleavage of the flexible loop between repeats LRR14 and LRR15 within the ectodomain (PubMed:18820679, PubMed:18931679). Cleavage requires UNC93B1 (PubMed:18820679). Proteolytically processed by first removing the majority of the ectodomain by either asparagine endopeptidase (AEP) or a cathepsin followed by a trimming event that is solely cathepsin mediated and required for optimal receptor signaling (PubMed:21402738).</text>
</comment>
<comment type="PTM">
    <text evidence="2">Palmitoylated by ZDHHC3 in the Golgi regulates TLR9 trafficking from the Golgi to endosomes. Depalmitoylation by PPT1 controls the release of TLR9 from UNC93B1 in endosomes.</text>
</comment>
<comment type="disruption phenotype">
    <text evidence="8">Reduced proliferation of lymphocytes, reduced interferon-gamma production by splenocytes and reduced neutrophil numbers following Helicobacter infection.</text>
</comment>
<comment type="similarity">
    <text evidence="20">Belongs to the Toll-like receptor family.</text>
</comment>
<evidence type="ECO:0000250" key="1">
    <source>
        <dbReference type="UniProtKB" id="Q2EEY0"/>
    </source>
</evidence>
<evidence type="ECO:0000250" key="2">
    <source>
        <dbReference type="UniProtKB" id="Q9NR96"/>
    </source>
</evidence>
<evidence type="ECO:0000255" key="3"/>
<evidence type="ECO:0000255" key="4">
    <source>
        <dbReference type="PROSITE-ProRule" id="PRU00204"/>
    </source>
</evidence>
<evidence type="ECO:0000256" key="5">
    <source>
        <dbReference type="SAM" id="MobiDB-lite"/>
    </source>
</evidence>
<evidence type="ECO:0000269" key="6">
    <source>
    </source>
</evidence>
<evidence type="ECO:0000269" key="7">
    <source>
    </source>
</evidence>
<evidence type="ECO:0000269" key="8">
    <source>
    </source>
</evidence>
<evidence type="ECO:0000269" key="9">
    <source>
    </source>
</evidence>
<evidence type="ECO:0000269" key="10">
    <source>
    </source>
</evidence>
<evidence type="ECO:0000269" key="11">
    <source>
    </source>
</evidence>
<evidence type="ECO:0000269" key="12">
    <source>
    </source>
</evidence>
<evidence type="ECO:0000269" key="13">
    <source>
    </source>
</evidence>
<evidence type="ECO:0000269" key="14">
    <source>
    </source>
</evidence>
<evidence type="ECO:0000269" key="15">
    <source>
    </source>
</evidence>
<evidence type="ECO:0000269" key="16">
    <source>
    </source>
</evidence>
<evidence type="ECO:0000269" key="17">
    <source>
    </source>
</evidence>
<evidence type="ECO:0000269" key="18">
    <source>
    </source>
</evidence>
<evidence type="ECO:0000269" key="19">
    <source>
    </source>
</evidence>
<evidence type="ECO:0000305" key="20"/>
<evidence type="ECO:0007744" key="21">
    <source>
        <dbReference type="PDB" id="3WPF"/>
    </source>
</evidence>
<evidence type="ECO:0007744" key="22">
    <source>
        <dbReference type="PDB" id="3WPG"/>
    </source>
</evidence>
<evidence type="ECO:0007744" key="23">
    <source>
        <dbReference type="PDB" id="3WPH"/>
    </source>
</evidence>
<evidence type="ECO:0007744" key="24">
    <source>
        <dbReference type="PDB" id="3WPI"/>
    </source>
</evidence>
<evidence type="ECO:0007829" key="25">
    <source>
        <dbReference type="PDB" id="3WPF"/>
    </source>
</evidence>
<evidence type="ECO:0007829" key="26">
    <source>
        <dbReference type="PDB" id="3WPH"/>
    </source>
</evidence>
<evidence type="ECO:0007829" key="27">
    <source>
        <dbReference type="PDB" id="3WPI"/>
    </source>
</evidence>
<evidence type="ECO:0007829" key="28">
    <source>
        <dbReference type="PDB" id="5ZLN"/>
    </source>
</evidence>
<sequence>MVLRRRTLHPLSLLVQAAVLAETLALGTLPAFLPCELKPHGLVDCNWLFLKSVPRFSAAASCSNITRLSLISNRIHHLHNSDFVHLSNLRQLNLKWNCPPTGLSPLHFSCHMTIEPRTFLAMRTLEELNLSYNGITTVPRLPSSLVNLSLSHTNILVLDANSLAGLYSLRVLFMDGNCYYKNPCTGAVKVTPGALLGLSNLTHLSLKYNNLTKVPRQLPPSLEYLLVSYNLIVKLGPEDLANLTSLRVLDVGGNCRRCDHAPNPCIECGQKSLHLHPETFHHLSHLEGLVLKDSSLHTLNSSWFQGLVNLSVLDLSENFLYESITHTNAFQNLTRLRKLNLSFNYRKKVSFARLHLASSFKNLVSLQELNMNGIFFRLLNKYTLRWLADLPKLHTLHLQMNFINQAQLSIFGTFRALRFVDLSDNRISGPSTLSEATPEEADDAEQEELLSADPHPAPLSTPASKNFMDRCKNFKFTMDLSRNNLVTIKPEMFVNLSRLQCLSLSHNSIAQAVNGSQFLPLTNLQVLDLSHNKLDLYHWKSFSELPQLQALDLSYNSQPFSMKGIGHNFSFVTHLSMLQSLSLAHNDIHTRVSSHLNSNSVRFLDFSGNGMGRMWDEGGLYLHFFQGLSGLLKLDLSQNNLHILRPQNLDNLPKSLKLLSLRDNYLSFFNWTSLSFLPNLEVLDLAGNQLKALTNGTLPNGTLLQKLDVSSNSIVSVVPAFFALAVELKEVNLSHNILKTVDRSWFGPIVMNLTVLDVRSNPLHCACGAAFVDLLLEVQTKVPGLANGVKCGSPGQLQGRSIFAQDLRLCLDEVLSWDCFGLSLLAVAVGMVVPILHHLCGWDVWYCFHLCLAWLPLLARSRRSAQTLPYDAFVVFDKAQSAVADWVYNELRVRLEERRGRRALRLCLEDRDWLPGQTLFENLWASIYGSRKTLFVLAHTDRVSGLLRTSFLLAQQRLLEDRKDVVVLVILRPDAHRSRYVRLRQRLCRQSVLFWPQQPNGQGGFWAQLSTALTRDNRHFYNQNFCRGPTAE</sequence>
<reference key="1">
    <citation type="journal article" date="2000" name="Nature">
        <title>A Toll-like receptor recognizes bacterial DNA.</title>
        <authorList>
            <person name="Hemmi H."/>
            <person name="Takeuchi O."/>
            <person name="Kawai T."/>
            <person name="Kaisho T."/>
            <person name="Sato S."/>
            <person name="Sanjo H."/>
            <person name="Matsumoto M."/>
            <person name="Hoshino K."/>
            <person name="Wagner H."/>
            <person name="Takeda K."/>
            <person name="Akira S."/>
        </authorList>
    </citation>
    <scope>NUCLEOTIDE SEQUENCE [MRNA]</scope>
</reference>
<reference key="2">
    <citation type="journal article" date="2001" name="Proc. Natl. Acad. Sci. U.S.A.">
        <title>Human TLR9 confers responsiveness to bacterial DNA via species-specific CpG motif recognition.</title>
        <authorList>
            <person name="Bauer S.M."/>
            <person name="Kirschning C.J."/>
            <person name="Hacker H."/>
            <person name="Redecke V."/>
            <person name="Hausmann S."/>
            <person name="Akira S."/>
            <person name="Wagner H."/>
            <person name="Lipford G.B."/>
        </authorList>
    </citation>
    <scope>NUCLEOTIDE SEQUENCE [MRNA]</scope>
    <source>
        <tissue>Macrophage</tissue>
    </source>
</reference>
<reference key="3">
    <citation type="journal article" date="2002" name="J. Leukoc. Biol.">
        <title>Toll-like receptor 9 mediates CpG-DNA signaling.</title>
        <authorList>
            <person name="Chuang T.-H."/>
            <person name="Lee J."/>
            <person name="Kline L."/>
            <person name="Mathison J.C."/>
            <person name="Ulevitch R.J."/>
        </authorList>
    </citation>
    <scope>NUCLEOTIDE SEQUENCE [MRNA]</scope>
    <source>
        <strain>BALB/cJ</strain>
    </source>
</reference>
<reference key="4">
    <citation type="journal article" date="2009" name="PLoS Biol.">
        <title>Lineage-specific biology revealed by a finished genome assembly of the mouse.</title>
        <authorList>
            <person name="Church D.M."/>
            <person name="Goodstadt L."/>
            <person name="Hillier L.W."/>
            <person name="Zody M.C."/>
            <person name="Goldstein S."/>
            <person name="She X."/>
            <person name="Bult C.J."/>
            <person name="Agarwala R."/>
            <person name="Cherry J.L."/>
            <person name="DiCuccio M."/>
            <person name="Hlavina W."/>
            <person name="Kapustin Y."/>
            <person name="Meric P."/>
            <person name="Maglott D."/>
            <person name="Birtle Z."/>
            <person name="Marques A.C."/>
            <person name="Graves T."/>
            <person name="Zhou S."/>
            <person name="Teague B."/>
            <person name="Potamousis K."/>
            <person name="Churas C."/>
            <person name="Place M."/>
            <person name="Herschleb J."/>
            <person name="Runnheim R."/>
            <person name="Forrest D."/>
            <person name="Amos-Landgraf J."/>
            <person name="Schwartz D.C."/>
            <person name="Cheng Z."/>
            <person name="Lindblad-Toh K."/>
            <person name="Eichler E.E."/>
            <person name="Ponting C.P."/>
        </authorList>
    </citation>
    <scope>NUCLEOTIDE SEQUENCE [LARGE SCALE GENOMIC DNA]</scope>
    <source>
        <strain>C57BL/6J</strain>
    </source>
</reference>
<reference key="5">
    <citation type="journal article" date="2007" name="Eur. J. Immunol.">
        <title>TLR9 polymorphisms determine murine lymphocyte responses to Helicobacter: results from a genome-wide scan.</title>
        <authorList>
            <person name="Anderson A.E."/>
            <person name="Worku M.L."/>
            <person name="Khamri W."/>
            <person name="Bamford K.B."/>
            <person name="Walker M.M."/>
            <person name="Thursz M.R."/>
        </authorList>
    </citation>
    <scope>NUCLEOTIDE SEQUENCE [GENOMIC DNA] OF 1-964</scope>
    <scope>FUNCTION</scope>
    <scope>TISSUE SPECIFICITY</scope>
    <scope>INDUCTION</scope>
    <scope>DISRUPTION PHENOTYPE</scope>
    <source>
        <strain>BALB/cJ</strain>
        <strain>C57BL/6J</strain>
    </source>
</reference>
<reference key="6">
    <citation type="journal article" date="2004" name="Proc. Natl. Acad. Sci. U.S.A.">
        <title>Toll-like receptors 9 and 3 as essential components of innate immune defense against mouse cytomegalovirus infection.</title>
        <authorList>
            <person name="Tabeta K."/>
            <person name="Georgel P."/>
            <person name="Janssen E."/>
            <person name="Du X."/>
            <person name="Hoebe K."/>
            <person name="Crozat K."/>
            <person name="Mudd S."/>
            <person name="Shamel L."/>
            <person name="Sovath S."/>
            <person name="Goode J."/>
            <person name="Alexopoulou L."/>
            <person name="Flavell R.A."/>
            <person name="Beutler B."/>
        </authorList>
    </citation>
    <scope>FUNCTION IN CYTOMEGALOVIRUS INFECTION</scope>
    <scope>MUTAGENESIS OF LEU-499</scope>
</reference>
<reference key="7">
    <citation type="journal article" date="2007" name="J. Cell Biol.">
        <title>The interaction between the ER membrane protein UNC93B and TLR3, 7, and 9 is crucial for TLR signaling.</title>
        <authorList>
            <person name="Brinkmann M.M."/>
            <person name="Spooner E."/>
            <person name="Hoebe K."/>
            <person name="Beutler B."/>
            <person name="Ploegh H.L."/>
            <person name="Kim Y.M."/>
        </authorList>
    </citation>
    <scope>IDENTIFICATION BY MASS SPECTROMETRY</scope>
    <scope>INTERACTION WITH UNC93B1</scope>
</reference>
<reference key="8">
    <citation type="journal article" date="2008" name="Int. Immunol.">
        <title>A single base mutation in the PRAT4A gene reveals differential interaction of PRAT4A with Toll-like receptors.</title>
        <authorList>
            <person name="Kiyokawa T."/>
            <person name="Akashi-Takamura S."/>
            <person name="Shibata T."/>
            <person name="Matsumoto F."/>
            <person name="Nishitani C."/>
            <person name="Kuroki Y."/>
            <person name="Seto Y."/>
            <person name="Miyake K."/>
        </authorList>
    </citation>
    <scope>INTERACTION WITH CNPY3</scope>
</reference>
<reference key="9">
    <citation type="journal article" date="2008" name="Nature">
        <title>UNC93B1 delivers nucleotide-sensing toll-like receptors to endolysosomes.</title>
        <authorList>
            <person name="Kim Y.M."/>
            <person name="Brinkmann M.M."/>
            <person name="Paquet M.E."/>
            <person name="Ploegh H.L."/>
        </authorList>
    </citation>
    <scope>SUBCELLULAR LOCATION</scope>
</reference>
<reference key="10">
    <citation type="journal article" date="2008" name="Nature">
        <title>The ectodomain of Toll-like receptor 9 is cleaved to generate a functional receptor.</title>
        <authorList>
            <person name="Ewald S.E."/>
            <person name="Lee B.L."/>
            <person name="Lau L."/>
            <person name="Wickliffe K.E."/>
            <person name="Shi G.P."/>
            <person name="Chapman H.A."/>
            <person name="Barton G.M."/>
        </authorList>
    </citation>
    <scope>FUNCTION</scope>
    <scope>INTERACTION WITH MYD88</scope>
    <scope>SUBCELLULAR LOCATION</scope>
    <scope>PROTEOLYTIC CLEAVAGE</scope>
</reference>
<reference key="11">
    <citation type="journal article" date="2008" name="Nat. Immunol.">
        <title>Proteolytic cleavage in an endolysosomal compartment is required for activation of Toll-like receptor 9.</title>
        <authorList>
            <person name="Park B."/>
            <person name="Brinkmann M.M."/>
            <person name="Spooner E."/>
            <person name="Lee C.C."/>
            <person name="Kim Y.M."/>
            <person name="Ploegh H.L."/>
        </authorList>
    </citation>
    <scope>FUNCTION</scope>
    <scope>INTERACTION WITH UNC93B1</scope>
    <scope>SUBCELLULAR LOCATION</scope>
    <scope>PROTEOLYTIC CLEAVAGE</scope>
    <scope>3D-STRUCTURE MODELING OF THE ECTODOMAIN</scope>
</reference>
<reference key="12">
    <citation type="journal article" date="2010" name="Cell">
        <title>A tissue-specific atlas of mouse protein phosphorylation and expression.</title>
        <authorList>
            <person name="Huttlin E.L."/>
            <person name="Jedrychowski M.P."/>
            <person name="Elias J.E."/>
            <person name="Goswami T."/>
            <person name="Rad R."/>
            <person name="Beausoleil S.A."/>
            <person name="Villen J."/>
            <person name="Haas W."/>
            <person name="Sowa M.E."/>
            <person name="Gygi S.P."/>
        </authorList>
    </citation>
    <scope>IDENTIFICATION BY MASS SPECTROMETRY [LARGE SCALE ANALYSIS]</scope>
    <source>
        <tissue>Spleen</tissue>
    </source>
</reference>
<reference key="13">
    <citation type="journal article" date="2010" name="Nat. Commun.">
        <title>Folding of Toll-like receptors by the HSP90 paralogue gp96 requires a substrate-specific cochaperone.</title>
        <authorList>
            <person name="Liu B."/>
            <person name="Yang Y."/>
            <person name="Qiu Z."/>
            <person name="Staron M."/>
            <person name="Hong F."/>
            <person name="Li Y."/>
            <person name="Wu S."/>
            <person name="Li Y."/>
            <person name="Hao B."/>
            <person name="Bona R."/>
            <person name="Han D."/>
            <person name="Li Z."/>
        </authorList>
    </citation>
    <scope>INTERACTION WITH CNPY3 AND HSP90B1</scope>
</reference>
<reference key="14">
    <citation type="journal article" date="2012" name="Nat. Commun.">
        <authorList>
            <person name="Liu B."/>
            <person name="Yang Y."/>
            <person name="Qiu Z."/>
            <person name="Staron M."/>
            <person name="Hong F."/>
            <person name="Li Y."/>
            <person name="Wu S."/>
            <person name="Li Y."/>
            <person name="Hao B."/>
            <person name="Bona R."/>
            <person name="Han D."/>
            <person name="Li Z."/>
        </authorList>
    </citation>
    <scope>ERRATUM OF PUBMED:20865800</scope>
</reference>
<reference key="15">
    <citation type="journal article" date="2011" name="J. Exp. Med.">
        <title>Nucleic acid recognition by Toll-like receptors is coupled to stepwise processing by cathepsins and asparagine endopeptidase.</title>
        <authorList>
            <person name="Ewald S.E."/>
            <person name="Engel A."/>
            <person name="Lee J."/>
            <person name="Wang M."/>
            <person name="Bogyo M."/>
            <person name="Barton G.M."/>
        </authorList>
    </citation>
    <scope>FUNCTION</scope>
    <scope>PROTEOLYTIC CLEAVAGE</scope>
</reference>
<reference key="16">
    <citation type="journal article" date="2011" name="J. Immunol.">
        <title>CMRF-35-like molecule 3 preferentially promotes TLR9-triggered proinflammatory cytokine production in macrophages by enhancing TNF receptor-associated factor 6 ubiquitination.</title>
        <authorList>
            <person name="Wu Y."/>
            <person name="Zhu X."/>
            <person name="Li N."/>
            <person name="Chen T."/>
            <person name="Yang M."/>
            <person name="Yao M."/>
            <person name="Liu X."/>
            <person name="Jin B."/>
            <person name="Wang X."/>
            <person name="Cao X."/>
        </authorList>
    </citation>
    <scope>INTERACTION WITH CD300LH</scope>
</reference>
<reference key="17">
    <citation type="journal article" date="2015" name="Cell Rep.">
        <title>The lipid-modifying enzyme SMPDL3B negatively regulates innate immunity.</title>
        <authorList>
            <person name="Heinz L.X."/>
            <person name="Baumann C.L."/>
            <person name="Koeberlin M.S."/>
            <person name="Snijder B."/>
            <person name="Gawish R."/>
            <person name="Shui G."/>
            <person name="Sharif O."/>
            <person name="Aspalter I.M."/>
            <person name="Mueller A.C."/>
            <person name="Kandasamy R.K."/>
            <person name="Breitwieser F.P."/>
            <person name="Pichlmair A."/>
            <person name="Bruckner M."/>
            <person name="Rebsamen M."/>
            <person name="Blueml S."/>
            <person name="Karonitsch T."/>
            <person name="Fauster A."/>
            <person name="Colinge J."/>
            <person name="Bennett K.L."/>
            <person name="Knapp S."/>
            <person name="Wenk M.R."/>
            <person name="Superti-Furga G."/>
        </authorList>
    </citation>
    <scope>INTERACTION WITH SMPDL3B</scope>
</reference>
<reference key="18">
    <citation type="journal article" date="2015" name="J. Immunol.">
        <title>Endoplasmic Protein Nogo-B (RTN4-B) Interacts with GRAMD4 and Regulates TLR9-Mediated Innate Immune Responses.</title>
        <authorList>
            <person name="Kimura T."/>
            <person name="Endo S."/>
            <person name="Inui M."/>
            <person name="Saitoh S."/>
            <person name="Miyake K."/>
            <person name="Takai T."/>
        </authorList>
    </citation>
    <scope>SUBCELLULAR LOCATION</scope>
</reference>
<reference key="19">
    <citation type="journal article" date="2019" name="FASEB J.">
        <title>CD82 controls CpG-dependent TLR9 signaling.</title>
        <authorList>
            <person name="Khan N.S."/>
            <person name="Lukason D.P."/>
            <person name="Feliu M."/>
            <person name="Ward R.A."/>
            <person name="Lord A.K."/>
            <person name="Reedy J.L."/>
            <person name="Ramirez-Ortiz Z.G."/>
            <person name="Tam J.M."/>
            <person name="Kasperkovitz P.V."/>
            <person name="Negoro P.E."/>
            <person name="Vyas T.D."/>
            <person name="Xu S."/>
            <person name="Brinkmann M.M."/>
            <person name="Acharaya M."/>
            <person name="Artavanis-Tsakonas K."/>
            <person name="Frickel E.M."/>
            <person name="Becker C.E."/>
            <person name="Dagher Z."/>
            <person name="Kim Y.M."/>
            <person name="Latz E."/>
            <person name="Ploegh H.L."/>
            <person name="Mansour M.K."/>
            <person name="Miranti C.K."/>
            <person name="Levitz S.M."/>
            <person name="Vyas J.M."/>
        </authorList>
    </citation>
    <scope>FUNCTION</scope>
    <scope>SUBCELLULAR LOCATION</scope>
    <scope>INTERACTION WITH CD82</scope>
</reference>
<reference key="20">
    <citation type="journal article" date="2015" name="Nature">
        <title>Structural basis of CpG and inhibitory DNA recognition by Toll-like receptor 9.</title>
        <authorList>
            <person name="Ohto U."/>
            <person name="Shibata T."/>
            <person name="Tanji H."/>
            <person name="Ishida H."/>
            <person name="Krayukhina E."/>
            <person name="Uchiyama S."/>
            <person name="Miyake K."/>
            <person name="Shimizu T."/>
        </authorList>
    </citation>
    <scope>X-RAY CRYSTALLOGRAPHY (1.96 ANGSTROMS) OF 26-818 OF UNLIGANDED REDUCED GLYCOSYLATION MUTANT AND IN COMPLEXES WITH INHIBITORY DNA</scope>
    <scope>FUNCTION</scope>
    <scope>GLYCOSYLATION AT ASN-210; ASN-332 AND ASN-732</scope>
    <scope>DISULFIDE BONDS</scope>
    <scope>MUTAGENESIS OF TRP-47; ARG-74; SER-104; PHE-108; TYR-132; HIS-152; TYR-179; TYR-229; HIS-642; PHE-668 AND ASN-695</scope>
</reference>
<gene>
    <name type="primary">Tlr9</name>
</gene>
<dbReference type="EMBL" id="AB045181">
    <property type="protein sequence ID" value="BAB19260.1"/>
    <property type="molecule type" value="mRNA"/>
</dbReference>
<dbReference type="EMBL" id="AF348140">
    <property type="protein sequence ID" value="AAK29625.1"/>
    <property type="molecule type" value="mRNA"/>
</dbReference>
<dbReference type="EMBL" id="AF314224">
    <property type="protein sequence ID" value="AAK28488.1"/>
    <property type="molecule type" value="mRNA"/>
</dbReference>
<dbReference type="EMBL" id="AC164430">
    <property type="status" value="NOT_ANNOTATED_CDS"/>
    <property type="molecule type" value="Genomic_DNA"/>
</dbReference>
<dbReference type="EMBL" id="AY649790">
    <property type="protein sequence ID" value="AAU04980.1"/>
    <property type="molecule type" value="Genomic_DNA"/>
</dbReference>
<dbReference type="EMBL" id="AY649791">
    <property type="protein sequence ID" value="AAU04981.1"/>
    <property type="molecule type" value="Genomic_DNA"/>
</dbReference>
<dbReference type="CCDS" id="CCDS40755.1"/>
<dbReference type="RefSeq" id="NP_112455.2">
    <property type="nucleotide sequence ID" value="NM_031178.2"/>
</dbReference>
<dbReference type="PDB" id="3WPF">
    <property type="method" value="X-ray"/>
    <property type="resolution" value="1.96 A"/>
    <property type="chains" value="A=26-818"/>
</dbReference>
<dbReference type="PDB" id="3WPG">
    <property type="method" value="X-ray"/>
    <property type="resolution" value="2.25 A"/>
    <property type="chains" value="A=26-818"/>
</dbReference>
<dbReference type="PDB" id="3WPH">
    <property type="method" value="X-ray"/>
    <property type="resolution" value="2.33 A"/>
    <property type="chains" value="A=26-818"/>
</dbReference>
<dbReference type="PDB" id="3WPI">
    <property type="method" value="X-ray"/>
    <property type="resolution" value="2.25 A"/>
    <property type="chains" value="A=26-818"/>
</dbReference>
<dbReference type="PDB" id="4QDH">
    <property type="method" value="X-ray"/>
    <property type="resolution" value="2.40 A"/>
    <property type="chains" value="A/B=480-753"/>
</dbReference>
<dbReference type="PDB" id="5ZLN">
    <property type="method" value="X-ray"/>
    <property type="resolution" value="2.30 A"/>
    <property type="chains" value="A/B=26-818"/>
</dbReference>
<dbReference type="PDBsum" id="3WPF"/>
<dbReference type="PDBsum" id="3WPG"/>
<dbReference type="PDBsum" id="3WPH"/>
<dbReference type="PDBsum" id="3WPI"/>
<dbReference type="PDBsum" id="4QDH"/>
<dbReference type="PDBsum" id="5ZLN"/>
<dbReference type="SMR" id="Q9EQU3"/>
<dbReference type="BioGRID" id="219897">
    <property type="interactions" value="2"/>
</dbReference>
<dbReference type="CORUM" id="Q9EQU3"/>
<dbReference type="FunCoup" id="Q9EQU3">
    <property type="interactions" value="119"/>
</dbReference>
<dbReference type="IntAct" id="Q9EQU3">
    <property type="interactions" value="28"/>
</dbReference>
<dbReference type="MINT" id="Q9EQU3"/>
<dbReference type="STRING" id="10090.ENSMUSP00000082207"/>
<dbReference type="BindingDB" id="Q9EQU3"/>
<dbReference type="ChEMBL" id="CHEMBL6128"/>
<dbReference type="GlyCosmos" id="Q9EQU3">
    <property type="glycosylation" value="18 sites, No reported glycans"/>
</dbReference>
<dbReference type="GlyGen" id="Q9EQU3">
    <property type="glycosylation" value="21 sites, 5 N-linked glycans (6 sites), 1 O-linked glycan (1 site)"/>
</dbReference>
<dbReference type="iPTMnet" id="Q9EQU3"/>
<dbReference type="PhosphoSitePlus" id="Q9EQU3"/>
<dbReference type="SwissPalm" id="Q9EQU3"/>
<dbReference type="PaxDb" id="10090-ENSMUSP00000082207"/>
<dbReference type="PeptideAtlas" id="Q9EQU3"/>
<dbReference type="ProteomicsDB" id="258897"/>
<dbReference type="ABCD" id="Q9EQU3">
    <property type="antibodies" value="1 sequenced antibody"/>
</dbReference>
<dbReference type="DNASU" id="81897"/>
<dbReference type="Ensembl" id="ENSMUST00000062241.11">
    <property type="protein sequence ID" value="ENSMUSP00000082207.7"/>
    <property type="gene ID" value="ENSMUSG00000045322.11"/>
</dbReference>
<dbReference type="GeneID" id="81897"/>
<dbReference type="KEGG" id="mmu:81897"/>
<dbReference type="UCSC" id="uc009rjh.1">
    <property type="organism name" value="mouse"/>
</dbReference>
<dbReference type="AGR" id="MGI:1932389"/>
<dbReference type="CTD" id="54106"/>
<dbReference type="MGI" id="MGI:1932389">
    <property type="gene designation" value="Tlr9"/>
</dbReference>
<dbReference type="VEuPathDB" id="HostDB:ENSMUSG00000045322"/>
<dbReference type="eggNOG" id="KOG4641">
    <property type="taxonomic scope" value="Eukaryota"/>
</dbReference>
<dbReference type="GeneTree" id="ENSGT00940000162493"/>
<dbReference type="HOGENOM" id="CLU_006000_2_0_1"/>
<dbReference type="InParanoid" id="Q9EQU3"/>
<dbReference type="OMA" id="YNQNFCR"/>
<dbReference type="OrthoDB" id="10006997at2759"/>
<dbReference type="PhylomeDB" id="Q9EQU3"/>
<dbReference type="TreeFam" id="TF325595"/>
<dbReference type="Reactome" id="R-MMU-109704">
    <property type="pathway name" value="PI3K Cascade"/>
</dbReference>
<dbReference type="Reactome" id="R-MMU-1679131">
    <property type="pathway name" value="Trafficking and processing of endosomal TLR"/>
</dbReference>
<dbReference type="Reactome" id="R-MMU-168138">
    <property type="pathway name" value="Toll Like Receptor 9 (TLR9) Cascade"/>
</dbReference>
<dbReference type="BioGRID-ORCS" id="81897">
    <property type="hits" value="2 hits in 75 CRISPR screens"/>
</dbReference>
<dbReference type="EvolutionaryTrace" id="Q9EQU3"/>
<dbReference type="PRO" id="PR:Q9EQU3"/>
<dbReference type="Proteomes" id="UP000000589">
    <property type="component" value="Chromosome 9"/>
</dbReference>
<dbReference type="RNAct" id="Q9EQU3">
    <property type="molecule type" value="protein"/>
</dbReference>
<dbReference type="Bgee" id="ENSMUSG00000045322">
    <property type="expression patterns" value="Expressed in animal zygote and 36 other cell types or tissues"/>
</dbReference>
<dbReference type="GO" id="GO:0016324">
    <property type="term" value="C:apical plasma membrane"/>
    <property type="evidence" value="ECO:0007669"/>
    <property type="project" value="Ensembl"/>
</dbReference>
<dbReference type="GO" id="GO:0016323">
    <property type="term" value="C:basolateral plasma membrane"/>
    <property type="evidence" value="ECO:0007669"/>
    <property type="project" value="Ensembl"/>
</dbReference>
<dbReference type="GO" id="GO:0031901">
    <property type="term" value="C:early endosome membrane"/>
    <property type="evidence" value="ECO:0007669"/>
    <property type="project" value="Ensembl"/>
</dbReference>
<dbReference type="GO" id="GO:0032009">
    <property type="term" value="C:early phagosome"/>
    <property type="evidence" value="ECO:0000314"/>
    <property type="project" value="UniProtKB"/>
</dbReference>
<dbReference type="GO" id="GO:0036019">
    <property type="term" value="C:endolysosome"/>
    <property type="evidence" value="ECO:0000314"/>
    <property type="project" value="UniProtKB"/>
</dbReference>
<dbReference type="GO" id="GO:0005783">
    <property type="term" value="C:endoplasmic reticulum"/>
    <property type="evidence" value="ECO:0000314"/>
    <property type="project" value="UniProtKB"/>
</dbReference>
<dbReference type="GO" id="GO:0005789">
    <property type="term" value="C:endoplasmic reticulum membrane"/>
    <property type="evidence" value="ECO:0007669"/>
    <property type="project" value="UniProtKB-SubCell"/>
</dbReference>
<dbReference type="GO" id="GO:0005768">
    <property type="term" value="C:endosome"/>
    <property type="evidence" value="ECO:0000314"/>
    <property type="project" value="UniProtKB"/>
</dbReference>
<dbReference type="GO" id="GO:0005764">
    <property type="term" value="C:lysosome"/>
    <property type="evidence" value="ECO:0000314"/>
    <property type="project" value="UniProtKB"/>
</dbReference>
<dbReference type="GO" id="GO:0045335">
    <property type="term" value="C:phagocytic vesicle"/>
    <property type="evidence" value="ECO:0000316"/>
    <property type="project" value="UniProtKB"/>
</dbReference>
<dbReference type="GO" id="GO:0005886">
    <property type="term" value="C:plasma membrane"/>
    <property type="evidence" value="ECO:0000314"/>
    <property type="project" value="MGI"/>
</dbReference>
<dbReference type="GO" id="GO:0005149">
    <property type="term" value="F:interleukin-1 receptor binding"/>
    <property type="evidence" value="ECO:0007669"/>
    <property type="project" value="Ensembl"/>
</dbReference>
<dbReference type="GO" id="GO:0038187">
    <property type="term" value="F:pattern recognition receptor activity"/>
    <property type="evidence" value="ECO:0007669"/>
    <property type="project" value="Ensembl"/>
</dbReference>
<dbReference type="GO" id="GO:0042803">
    <property type="term" value="F:protein homodimerization activity"/>
    <property type="evidence" value="ECO:0000250"/>
    <property type="project" value="UniProtKB"/>
</dbReference>
<dbReference type="GO" id="GO:0035197">
    <property type="term" value="F:siRNA binding"/>
    <property type="evidence" value="ECO:0000250"/>
    <property type="project" value="UniProtKB"/>
</dbReference>
<dbReference type="GO" id="GO:0045322">
    <property type="term" value="F:unmethylated CpG binding"/>
    <property type="evidence" value="ECO:0000250"/>
    <property type="project" value="UniProtKB"/>
</dbReference>
<dbReference type="GO" id="GO:0002218">
    <property type="term" value="P:activation of innate immune response"/>
    <property type="evidence" value="ECO:0000314"/>
    <property type="project" value="UniProtKB"/>
</dbReference>
<dbReference type="GO" id="GO:0007249">
    <property type="term" value="P:canonical NF-kappaB signal transduction"/>
    <property type="evidence" value="ECO:0000314"/>
    <property type="project" value="UniProtKB"/>
</dbReference>
<dbReference type="GO" id="GO:1902350">
    <property type="term" value="P:cellular response to chloroquine"/>
    <property type="evidence" value="ECO:0000314"/>
    <property type="project" value="MGI"/>
</dbReference>
<dbReference type="GO" id="GO:0071222">
    <property type="term" value="P:cellular response to lipopolysaccharide"/>
    <property type="evidence" value="ECO:0007669"/>
    <property type="project" value="Ensembl"/>
</dbReference>
<dbReference type="GO" id="GO:0071248">
    <property type="term" value="P:cellular response to metal ion"/>
    <property type="evidence" value="ECO:0007669"/>
    <property type="project" value="Ensembl"/>
</dbReference>
<dbReference type="GO" id="GO:0050829">
    <property type="term" value="P:defense response to Gram-negative bacterium"/>
    <property type="evidence" value="ECO:0007669"/>
    <property type="project" value="Ensembl"/>
</dbReference>
<dbReference type="GO" id="GO:0051607">
    <property type="term" value="P:defense response to virus"/>
    <property type="evidence" value="ECO:0000316"/>
    <property type="project" value="MGI"/>
</dbReference>
<dbReference type="GO" id="GO:0032490">
    <property type="term" value="P:detection of molecule of bacterial origin"/>
    <property type="evidence" value="ECO:0007669"/>
    <property type="project" value="Ensembl"/>
</dbReference>
<dbReference type="GO" id="GO:0006955">
    <property type="term" value="P:immune response"/>
    <property type="evidence" value="ECO:0000315"/>
    <property type="project" value="MGI"/>
</dbReference>
<dbReference type="GO" id="GO:0045087">
    <property type="term" value="P:innate immune response"/>
    <property type="evidence" value="ECO:0000314"/>
    <property type="project" value="BHF-UCL"/>
</dbReference>
<dbReference type="GO" id="GO:0030277">
    <property type="term" value="P:maintenance of gastrointestinal epithelium"/>
    <property type="evidence" value="ECO:0000315"/>
    <property type="project" value="BHF-UCL"/>
</dbReference>
<dbReference type="GO" id="GO:0008584">
    <property type="term" value="P:male gonad development"/>
    <property type="evidence" value="ECO:0007669"/>
    <property type="project" value="Ensembl"/>
</dbReference>
<dbReference type="GO" id="GO:0001774">
    <property type="term" value="P:microglial cell activation"/>
    <property type="evidence" value="ECO:0007669"/>
    <property type="project" value="Ensembl"/>
</dbReference>
<dbReference type="GO" id="GO:0002755">
    <property type="term" value="P:MyD88-dependent toll-like receptor signaling pathway"/>
    <property type="evidence" value="ECO:0000353"/>
    <property type="project" value="UniProtKB"/>
</dbReference>
<dbReference type="GO" id="GO:0070373">
    <property type="term" value="P:negative regulation of ERK1 and ERK2 cascade"/>
    <property type="evidence" value="ECO:0000316"/>
    <property type="project" value="MGI"/>
</dbReference>
<dbReference type="GO" id="GO:0010508">
    <property type="term" value="P:positive regulation of autophagy"/>
    <property type="evidence" value="ECO:0007669"/>
    <property type="project" value="Ensembl"/>
</dbReference>
<dbReference type="GO" id="GO:0050871">
    <property type="term" value="P:positive regulation of B cell activation"/>
    <property type="evidence" value="ECO:0000250"/>
    <property type="project" value="UniProtKB"/>
</dbReference>
<dbReference type="GO" id="GO:0030890">
    <property type="term" value="P:positive regulation of B cell proliferation"/>
    <property type="evidence" value="ECO:0000250"/>
    <property type="project" value="UniProtKB"/>
</dbReference>
<dbReference type="GO" id="GO:0043123">
    <property type="term" value="P:positive regulation of canonical NF-kappaB signal transduction"/>
    <property type="evidence" value="ECO:0007669"/>
    <property type="project" value="Ensembl"/>
</dbReference>
<dbReference type="GO" id="GO:0032722">
    <property type="term" value="P:positive regulation of chemokine production"/>
    <property type="evidence" value="ECO:0007669"/>
    <property type="project" value="Ensembl"/>
</dbReference>
<dbReference type="GO" id="GO:0001819">
    <property type="term" value="P:positive regulation of cytokine production"/>
    <property type="evidence" value="ECO:0000314"/>
    <property type="project" value="UniProtKB"/>
</dbReference>
<dbReference type="GO" id="GO:0032725">
    <property type="term" value="P:positive regulation of granulocyte macrophage colony-stimulating factor production"/>
    <property type="evidence" value="ECO:0007669"/>
    <property type="project" value="Ensembl"/>
</dbReference>
<dbReference type="GO" id="GO:0002639">
    <property type="term" value="P:positive regulation of immunoglobulin production"/>
    <property type="evidence" value="ECO:0000250"/>
    <property type="project" value="UniProtKB"/>
</dbReference>
<dbReference type="GO" id="GO:0032727">
    <property type="term" value="P:positive regulation of interferon-alpha production"/>
    <property type="evidence" value="ECO:0000250"/>
    <property type="project" value="UniProtKB"/>
</dbReference>
<dbReference type="GO" id="GO:0032728">
    <property type="term" value="P:positive regulation of interferon-beta production"/>
    <property type="evidence" value="ECO:0000314"/>
    <property type="project" value="BHF-UCL"/>
</dbReference>
<dbReference type="GO" id="GO:0032733">
    <property type="term" value="P:positive regulation of interleukin-10 production"/>
    <property type="evidence" value="ECO:0000314"/>
    <property type="project" value="BHF-UCL"/>
</dbReference>
<dbReference type="GO" id="GO:0032735">
    <property type="term" value="P:positive regulation of interleukin-12 production"/>
    <property type="evidence" value="ECO:0000314"/>
    <property type="project" value="BHF-UCL"/>
</dbReference>
<dbReference type="GO" id="GO:0032741">
    <property type="term" value="P:positive regulation of interleukin-18 production"/>
    <property type="evidence" value="ECO:0000314"/>
    <property type="project" value="BHF-UCL"/>
</dbReference>
<dbReference type="GO" id="GO:0032755">
    <property type="term" value="P:positive regulation of interleukin-6 production"/>
    <property type="evidence" value="ECO:0000314"/>
    <property type="project" value="BHF-UCL"/>
</dbReference>
<dbReference type="GO" id="GO:0032757">
    <property type="term" value="P:positive regulation of interleukin-8 production"/>
    <property type="evidence" value="ECO:0007669"/>
    <property type="project" value="Ensembl"/>
</dbReference>
<dbReference type="GO" id="GO:1905300">
    <property type="term" value="P:positive regulation of intestinal epithelial cell development"/>
    <property type="evidence" value="ECO:0000315"/>
    <property type="project" value="BHF-UCL"/>
</dbReference>
<dbReference type="GO" id="GO:0046330">
    <property type="term" value="P:positive regulation of JNK cascade"/>
    <property type="evidence" value="ECO:0007669"/>
    <property type="project" value="Ensembl"/>
</dbReference>
<dbReference type="GO" id="GO:0043410">
    <property type="term" value="P:positive regulation of MAPK cascade"/>
    <property type="evidence" value="ECO:0000250"/>
    <property type="project" value="UniProtKB"/>
</dbReference>
<dbReference type="GO" id="GO:1901224">
    <property type="term" value="P:positive regulation of non-canonical NF-kappaB signal transduction"/>
    <property type="evidence" value="ECO:0007669"/>
    <property type="project" value="Ensembl"/>
</dbReference>
<dbReference type="GO" id="GO:0034165">
    <property type="term" value="P:positive regulation of toll-like receptor 9 signaling pathway"/>
    <property type="evidence" value="ECO:0000315"/>
    <property type="project" value="UniProtKB"/>
</dbReference>
<dbReference type="GO" id="GO:0045944">
    <property type="term" value="P:positive regulation of transcription by RNA polymerase II"/>
    <property type="evidence" value="ECO:0000314"/>
    <property type="project" value="BHF-UCL"/>
</dbReference>
<dbReference type="GO" id="GO:0032760">
    <property type="term" value="P:positive regulation of tumor necrosis factor production"/>
    <property type="evidence" value="ECO:0000314"/>
    <property type="project" value="BHF-UCL"/>
</dbReference>
<dbReference type="GO" id="GO:0032729">
    <property type="term" value="P:positive regulation of type II interferon production"/>
    <property type="evidence" value="ECO:0000250"/>
    <property type="project" value="UniProtKB"/>
</dbReference>
<dbReference type="GO" id="GO:0050864">
    <property type="term" value="P:regulation of B cell activation"/>
    <property type="evidence" value="ECO:0000316"/>
    <property type="project" value="MGI"/>
</dbReference>
<dbReference type="GO" id="GO:0045577">
    <property type="term" value="P:regulation of B cell differentiation"/>
    <property type="evidence" value="ECO:0000250"/>
    <property type="project" value="UniProtKB"/>
</dbReference>
<dbReference type="GO" id="GO:0002730">
    <property type="term" value="P:regulation of dendritic cell cytokine production"/>
    <property type="evidence" value="ECO:0000314"/>
    <property type="project" value="MGI"/>
</dbReference>
<dbReference type="GO" id="GO:0050727">
    <property type="term" value="P:regulation of inflammatory response"/>
    <property type="evidence" value="ECO:0000315"/>
    <property type="project" value="BHF-UCL"/>
</dbReference>
<dbReference type="GO" id="GO:0002237">
    <property type="term" value="P:response to molecule of bacterial origin"/>
    <property type="evidence" value="ECO:0000304"/>
    <property type="project" value="BHF-UCL"/>
</dbReference>
<dbReference type="GO" id="GO:0009615">
    <property type="term" value="P:response to virus"/>
    <property type="evidence" value="ECO:0000315"/>
    <property type="project" value="MGI"/>
</dbReference>
<dbReference type="GO" id="GO:0034162">
    <property type="term" value="P:toll-like receptor 9 signaling pathway"/>
    <property type="evidence" value="ECO:0007669"/>
    <property type="project" value="Ensembl"/>
</dbReference>
<dbReference type="FunFam" id="3.40.50.10140:FF:000003">
    <property type="entry name" value="Toll-like receptor 7"/>
    <property type="match status" value="1"/>
</dbReference>
<dbReference type="FunFam" id="3.80.10.10:FF:000037">
    <property type="entry name" value="Toll-like receptor 7"/>
    <property type="match status" value="1"/>
</dbReference>
<dbReference type="Gene3D" id="3.80.10.10">
    <property type="entry name" value="Ribonuclease Inhibitor"/>
    <property type="match status" value="1"/>
</dbReference>
<dbReference type="Gene3D" id="3.40.50.10140">
    <property type="entry name" value="Toll/interleukin-1 receptor homology (TIR) domain"/>
    <property type="match status" value="1"/>
</dbReference>
<dbReference type="InterPro" id="IPR001611">
    <property type="entry name" value="Leu-rich_rpt"/>
</dbReference>
<dbReference type="InterPro" id="IPR003591">
    <property type="entry name" value="Leu-rich_rpt_typical-subtyp"/>
</dbReference>
<dbReference type="InterPro" id="IPR041283">
    <property type="entry name" value="LRR_12"/>
</dbReference>
<dbReference type="InterPro" id="IPR032675">
    <property type="entry name" value="LRR_dom_sf"/>
</dbReference>
<dbReference type="InterPro" id="IPR000157">
    <property type="entry name" value="TIR_dom"/>
</dbReference>
<dbReference type="InterPro" id="IPR035897">
    <property type="entry name" value="Toll_tir_struct_dom_sf"/>
</dbReference>
<dbReference type="PANTHER" id="PTHR47410">
    <property type="entry name" value="TOLL-LIKE RECEPTOR 7-RELATED"/>
    <property type="match status" value="1"/>
</dbReference>
<dbReference type="PANTHER" id="PTHR47410:SF3">
    <property type="entry name" value="TOLL-LIKE RECEPTOR 9"/>
    <property type="match status" value="1"/>
</dbReference>
<dbReference type="Pfam" id="PF18837">
    <property type="entry name" value="LRR_12"/>
    <property type="match status" value="1"/>
</dbReference>
<dbReference type="Pfam" id="PF13855">
    <property type="entry name" value="LRR_8"/>
    <property type="match status" value="4"/>
</dbReference>
<dbReference type="Pfam" id="PF01582">
    <property type="entry name" value="TIR"/>
    <property type="match status" value="1"/>
</dbReference>
<dbReference type="PRINTS" id="PR00019">
    <property type="entry name" value="LEURICHRPT"/>
</dbReference>
<dbReference type="SMART" id="SM00365">
    <property type="entry name" value="LRR_SD22"/>
    <property type="match status" value="9"/>
</dbReference>
<dbReference type="SMART" id="SM00369">
    <property type="entry name" value="LRR_TYP"/>
    <property type="match status" value="15"/>
</dbReference>
<dbReference type="SMART" id="SM00255">
    <property type="entry name" value="TIR"/>
    <property type="match status" value="1"/>
</dbReference>
<dbReference type="SUPFAM" id="SSF52058">
    <property type="entry name" value="L domain-like"/>
    <property type="match status" value="1"/>
</dbReference>
<dbReference type="SUPFAM" id="SSF52047">
    <property type="entry name" value="RNI-like"/>
    <property type="match status" value="1"/>
</dbReference>
<dbReference type="SUPFAM" id="SSF52200">
    <property type="entry name" value="Toll/Interleukin receptor TIR domain"/>
    <property type="match status" value="1"/>
</dbReference>
<dbReference type="PROSITE" id="PS51450">
    <property type="entry name" value="LRR"/>
    <property type="match status" value="16"/>
</dbReference>
<dbReference type="PROSITE" id="PS50104">
    <property type="entry name" value="TIR"/>
    <property type="match status" value="1"/>
</dbReference>
<organism>
    <name type="scientific">Mus musculus</name>
    <name type="common">Mouse</name>
    <dbReference type="NCBI Taxonomy" id="10090"/>
    <lineage>
        <taxon>Eukaryota</taxon>
        <taxon>Metazoa</taxon>
        <taxon>Chordata</taxon>
        <taxon>Craniata</taxon>
        <taxon>Vertebrata</taxon>
        <taxon>Euteleostomi</taxon>
        <taxon>Mammalia</taxon>
        <taxon>Eutheria</taxon>
        <taxon>Euarchontoglires</taxon>
        <taxon>Glires</taxon>
        <taxon>Rodentia</taxon>
        <taxon>Myomorpha</taxon>
        <taxon>Muroidea</taxon>
        <taxon>Muridae</taxon>
        <taxon>Murinae</taxon>
        <taxon>Mus</taxon>
        <taxon>Mus</taxon>
    </lineage>
</organism>
<keyword id="KW-0002">3D-structure</keyword>
<keyword id="KW-0968">Cytoplasmic vesicle</keyword>
<keyword id="KW-1015">Disulfide bond</keyword>
<keyword id="KW-0256">Endoplasmic reticulum</keyword>
<keyword id="KW-0967">Endosome</keyword>
<keyword id="KW-0325">Glycoprotein</keyword>
<keyword id="KW-0391">Immunity</keyword>
<keyword id="KW-0395">Inflammatory response</keyword>
<keyword id="KW-0399">Innate immunity</keyword>
<keyword id="KW-0433">Leucine-rich repeat</keyword>
<keyword id="KW-0449">Lipoprotein</keyword>
<keyword id="KW-0458">Lysosome</keyword>
<keyword id="KW-0472">Membrane</keyword>
<keyword id="KW-0564">Palmitate</keyword>
<keyword id="KW-0675">Receptor</keyword>
<keyword id="KW-1185">Reference proteome</keyword>
<keyword id="KW-0677">Repeat</keyword>
<keyword id="KW-0732">Signal</keyword>
<keyword id="KW-0812">Transmembrane</keyword>
<keyword id="KW-1133">Transmembrane helix</keyword>
<protein>
    <recommendedName>
        <fullName>Toll-like receptor 9</fullName>
    </recommendedName>
    <cdAntigenName>CD289</cdAntigenName>
</protein>
<feature type="signal peptide" evidence="3">
    <location>
        <begin position="1"/>
        <end position="25"/>
    </location>
</feature>
<feature type="chain" id="PRO_0000034738" description="Toll-like receptor 9">
    <location>
        <begin position="26"/>
        <end position="1032"/>
    </location>
</feature>
<feature type="topological domain" description="Extracellular" evidence="3">
    <location>
        <begin position="26"/>
        <end position="818"/>
    </location>
</feature>
<feature type="transmembrane region" description="Helical" evidence="3">
    <location>
        <begin position="819"/>
        <end position="839"/>
    </location>
</feature>
<feature type="topological domain" description="Cytoplasmic" evidence="3">
    <location>
        <begin position="840"/>
        <end position="1032"/>
    </location>
</feature>
<feature type="repeat" description="LRR 1">
    <location>
        <begin position="62"/>
        <end position="85"/>
    </location>
</feature>
<feature type="repeat" description="LRR 2">
    <location>
        <begin position="87"/>
        <end position="110"/>
    </location>
</feature>
<feature type="repeat" description="LRR 3">
    <location>
        <begin position="122"/>
        <end position="147"/>
    </location>
</feature>
<feature type="repeat" description="LRR 4">
    <location>
        <begin position="150"/>
        <end position="166"/>
    </location>
</feature>
<feature type="repeat" description="LRR 5">
    <location>
        <begin position="167"/>
        <end position="190"/>
    </location>
</feature>
<feature type="repeat" description="LRR 6">
    <location>
        <begin position="198"/>
        <end position="221"/>
    </location>
</feature>
<feature type="repeat" description="LRR 7">
    <location>
        <begin position="223"/>
        <end position="242"/>
    </location>
</feature>
<feature type="repeat" description="LRR 8">
    <location>
        <begin position="243"/>
        <end position="268"/>
    </location>
</feature>
<feature type="repeat" description="LRR 9">
    <location>
        <begin position="283"/>
        <end position="306"/>
    </location>
</feature>
<feature type="repeat" description="LRR 10">
    <location>
        <begin position="308"/>
        <end position="332"/>
    </location>
</feature>
<feature type="repeat" description="LRR 11">
    <location>
        <begin position="333"/>
        <end position="356"/>
    </location>
</feature>
<feature type="repeat" description="LRR 12">
    <location>
        <begin position="363"/>
        <end position="386"/>
    </location>
</feature>
<feature type="repeat" description="LRR 13">
    <location>
        <begin position="390"/>
        <end position="413"/>
    </location>
</feature>
<feature type="repeat" description="LRR 14">
    <location>
        <begin position="415"/>
        <end position="440"/>
    </location>
</feature>
<feature type="repeat" description="LRR 15">
    <location>
        <begin position="471"/>
        <end position="495"/>
    </location>
</feature>
<feature type="repeat" description="LRR 16">
    <location>
        <begin position="497"/>
        <end position="520"/>
    </location>
</feature>
<feature type="repeat" description="LRR 17">
    <location>
        <begin position="521"/>
        <end position="544"/>
    </location>
</feature>
<feature type="repeat" description="LRR 18">
    <location>
        <begin position="546"/>
        <end position="573"/>
    </location>
</feature>
<feature type="repeat" description="LRR 19">
    <location>
        <begin position="575"/>
        <end position="599"/>
    </location>
</feature>
<feature type="repeat" description="LRR 20">
    <location>
        <begin position="601"/>
        <end position="623"/>
    </location>
</feature>
<feature type="repeat" description="LRR 21">
    <location>
        <begin position="628"/>
        <end position="651"/>
    </location>
</feature>
<feature type="repeat" description="LRR 22">
    <location>
        <begin position="653"/>
        <end position="676"/>
    </location>
</feature>
<feature type="repeat" description="LRR 23">
    <location>
        <begin position="677"/>
        <end position="700"/>
    </location>
</feature>
<feature type="repeat" description="LRR 24">
    <location>
        <begin position="702"/>
        <end position="724"/>
    </location>
</feature>
<feature type="repeat" description="LRR 25">
    <location>
        <begin position="725"/>
        <end position="748"/>
    </location>
</feature>
<feature type="repeat" description="LRR 26">
    <location>
        <begin position="750"/>
        <end position="773"/>
    </location>
</feature>
<feature type="domain" description="TIR" evidence="4">
    <location>
        <begin position="868"/>
        <end position="1013"/>
    </location>
</feature>
<feature type="region of interest" description="Disordered" evidence="5">
    <location>
        <begin position="430"/>
        <end position="462"/>
    </location>
</feature>
<feature type="compositionally biased region" description="Acidic residues" evidence="5">
    <location>
        <begin position="437"/>
        <end position="450"/>
    </location>
</feature>
<feature type="binding site" evidence="1">
    <location>
        <begin position="47"/>
        <end position="51"/>
    </location>
    <ligand>
        <name>DNA</name>
        <dbReference type="ChEBI" id="CHEBI:16991"/>
        <note>CpG-containing DNA</note>
    </ligand>
</feature>
<feature type="binding site" evidence="1">
    <location>
        <begin position="72"/>
        <end position="77"/>
    </location>
    <ligand>
        <name>DNA</name>
        <dbReference type="ChEBI" id="CHEBI:16991"/>
        <note>CpG-containing DNA</note>
    </ligand>
</feature>
<feature type="binding site" evidence="1">
    <location>
        <begin position="95"/>
        <end position="109"/>
    </location>
    <ligand>
        <name>DNA</name>
        <dbReference type="ChEBI" id="CHEBI:16991"/>
        <note>CpG-containing DNA</note>
    </ligand>
</feature>
<feature type="binding site" evidence="1">
    <location>
        <position position="132"/>
    </location>
    <ligand>
        <name>DNA</name>
        <dbReference type="ChEBI" id="CHEBI:16991"/>
        <note>CpG-containing DNA</note>
    </ligand>
</feature>
<feature type="binding site" evidence="1">
    <location>
        <begin position="179"/>
        <end position="181"/>
    </location>
    <ligand>
        <name>DNA</name>
        <dbReference type="ChEBI" id="CHEBI:16991"/>
        <note>CpG-containing DNA</note>
    </ligand>
</feature>
<feature type="binding site" evidence="1">
    <location>
        <position position="208"/>
    </location>
    <ligand>
        <name>DNA</name>
        <dbReference type="ChEBI" id="CHEBI:16991"/>
        <note>CpG-containing DNA</note>
    </ligand>
</feature>
<feature type="lipid moiety-binding region" description="S-palmitoyl cysteine" evidence="2">
    <location>
        <position position="258"/>
    </location>
</feature>
<feature type="lipid moiety-binding region" description="S-palmitoyl cysteine" evidence="2">
    <location>
        <position position="265"/>
    </location>
</feature>
<feature type="glycosylation site" description="N-linked (GlcNAc...) asparagine" evidence="3">
    <location>
        <position position="64"/>
    </location>
</feature>
<feature type="glycosylation site" description="N-linked (GlcNAc...) asparagine" evidence="3">
    <location>
        <position position="129"/>
    </location>
</feature>
<feature type="glycosylation site" description="N-linked (GlcNAc...) asparagine" evidence="3">
    <location>
        <position position="147"/>
    </location>
</feature>
<feature type="glycosylation site" description="N-linked (GlcNAc...) asparagine" evidence="3">
    <location>
        <position position="200"/>
    </location>
</feature>
<feature type="glycosylation site" description="N-linked (GlcNAc...) asparagine" evidence="3 16 21">
    <location>
        <position position="210"/>
    </location>
</feature>
<feature type="glycosylation site" description="N-linked (GlcNAc...) asparagine" evidence="3">
    <location>
        <position position="242"/>
    </location>
</feature>
<feature type="glycosylation site" description="N-linked (GlcNAc...) asparagine" evidence="3">
    <location>
        <position position="300"/>
    </location>
</feature>
<feature type="glycosylation site" description="N-linked (GlcNAc...) asparagine" evidence="3">
    <location>
        <position position="309"/>
    </location>
</feature>
<feature type="glycosylation site" description="N-linked (GlcNAc...) asparagine" evidence="3 16 21 23">
    <location>
        <position position="332"/>
    </location>
</feature>
<feature type="glycosylation site" description="N-linked (GlcNAc...) asparagine" evidence="3">
    <location>
        <position position="340"/>
    </location>
</feature>
<feature type="glycosylation site" description="N-linked (GlcNAc...) asparagine" evidence="3">
    <location>
        <position position="495"/>
    </location>
</feature>
<feature type="glycosylation site" description="N-linked (GlcNAc...) asparagine" evidence="3">
    <location>
        <position position="514"/>
    </location>
</feature>
<feature type="glycosylation site" description="N-linked (GlcNAc...) asparagine" evidence="3">
    <location>
        <position position="568"/>
    </location>
</feature>
<feature type="glycosylation site" description="N-linked (GlcNAc...) asparagine" evidence="3">
    <location>
        <position position="670"/>
    </location>
</feature>
<feature type="glycosylation site" description="N-linked (GlcNAc...) asparagine" evidence="3">
    <location>
        <position position="695"/>
    </location>
</feature>
<feature type="glycosylation site" description="N-linked (GlcNAc...) asparagine" evidence="3">
    <location>
        <position position="700"/>
    </location>
</feature>
<feature type="glycosylation site" description="N-linked (GlcNAc...) asparagine" evidence="3 16 21 22 23 24">
    <location>
        <position position="732"/>
    </location>
</feature>
<feature type="glycosylation site" description="N-linked (GlcNAc...) asparagine" evidence="3">
    <location>
        <position position="752"/>
    </location>
</feature>
<feature type="disulfide bond" evidence="16 21 22 23 24">
    <location>
        <begin position="35"/>
        <end position="45"/>
    </location>
</feature>
<feature type="disulfide bond" evidence="16 21 22 23 24">
    <location>
        <begin position="98"/>
        <end position="110"/>
    </location>
</feature>
<feature type="disulfide bond" evidence="16 21 22 23 24">
    <location>
        <begin position="178"/>
        <end position="184"/>
    </location>
</feature>
<feature type="disulfide bond" evidence="16 21 22 23 24">
    <location>
        <begin position="255"/>
        <end position="268"/>
    </location>
</feature>
<feature type="disulfide bond" evidence="16 21 22 23 24">
    <location>
        <begin position="258"/>
        <end position="265"/>
    </location>
</feature>
<feature type="disulfide bond" evidence="16 21 22 23 24">
    <location>
        <begin position="471"/>
        <end position="501"/>
    </location>
</feature>
<feature type="disulfide bond" evidence="16 21 22 23 24">
    <location>
        <begin position="765"/>
        <end position="791"/>
    </location>
</feature>
<feature type="disulfide bond" evidence="16 21 22 23 24">
    <location>
        <begin position="767"/>
        <end position="810"/>
    </location>
</feature>
<feature type="mutagenesis site" description="Significantly decreased NF-kappa-B activation." evidence="16">
    <original>W</original>
    <variation>A</variation>
    <location>
        <position position="47"/>
    </location>
</feature>
<feature type="mutagenesis site" description="Significantly decreased NF-kappa-B activation." evidence="16">
    <original>R</original>
    <variation>A</variation>
    <location>
        <position position="74"/>
    </location>
</feature>
<feature type="mutagenesis site" description="Significantly decreased NF-kappa-B activation." evidence="16">
    <original>S</original>
    <variation>A</variation>
    <location>
        <position position="104"/>
    </location>
</feature>
<feature type="mutagenesis site" description="Significantly decreased NF-kappa-B activation." evidence="16">
    <original>F</original>
    <variation>A</variation>
    <location>
        <position position="108"/>
    </location>
</feature>
<feature type="mutagenesis site" description="Significantly decreased NF-kappa-B activation." evidence="16">
    <original>Y</original>
    <variation>A</variation>
    <location>
        <position position="132"/>
    </location>
</feature>
<feature type="mutagenesis site" description="Significantly decreased NF-kappa-B activation." evidence="16">
    <original>H</original>
    <variation>A</variation>
    <location>
        <position position="152"/>
    </location>
</feature>
<feature type="mutagenesis site" description="Significantly decreased NF-kappa-B activation." evidence="16">
    <original>Y</original>
    <variation>A</variation>
    <location>
        <position position="179"/>
    </location>
</feature>
<feature type="mutagenesis site" description="Significantly decreased NF-kappa-B activation." evidence="16">
    <original>Y</original>
    <variation>A</variation>
    <location>
        <position position="229"/>
    </location>
</feature>
<feature type="mutagenesis site" description="Highly susceptible to mouse cytomegalovirus infection. Shows low level of cytokine induction and natural killer activation on viral infection." evidence="6">
    <original>L</original>
    <variation>P</variation>
    <location>
        <position position="499"/>
    </location>
</feature>
<feature type="mutagenesis site" description="Loss of NF-kappa-B activation." evidence="16">
    <original>H</original>
    <variation>A</variation>
    <location>
        <position position="642"/>
    </location>
</feature>
<feature type="mutagenesis site" description="Significantly decreased NF-kappa-B activation." evidence="16">
    <original>F</original>
    <variation>A</variation>
    <location>
        <position position="668"/>
    </location>
</feature>
<feature type="mutagenesis site" description="Significantly decreased NF-kappa-B activation." evidence="16">
    <original>N</original>
    <variation>A</variation>
    <location>
        <position position="695"/>
    </location>
</feature>
<feature type="sequence conflict" description="In Ref. 1; BAB19260, 2; AAK29625, 3; AAK28488 and 5; AAU04980." evidence="20" ref="1 2 3 5">
    <original>T</original>
    <variation>N</variation>
    <location>
        <position position="325"/>
    </location>
</feature>
<feature type="sequence conflict" description="In Ref. 1; BAB19260, 2; AAK29625, 3; AAK28488 and 5; AAU04980." evidence="20" ref="1 2 3 5">
    <original>L</original>
    <variation>S</variation>
    <location>
        <position position="378"/>
    </location>
</feature>
<feature type="sequence conflict" description="In Ref. 3; AAK28488." evidence="20" ref="3">
    <original>S</original>
    <variation>G</variation>
    <location>
        <position position="554"/>
    </location>
</feature>
<feature type="sequence conflict" description="In Ref. 3; AAK28488." evidence="20" ref="3">
    <original>M</original>
    <variation>I</variation>
    <location>
        <position position="562"/>
    </location>
</feature>
<feature type="sequence conflict" description="In Ref. 2; AAK29625, 3; AAK28488 and 5; AAU04980." evidence="20" ref="2 3 5">
    <original>T</original>
    <variation>A</variation>
    <location>
        <position position="573"/>
    </location>
</feature>
<feature type="sequence conflict" description="In Ref. 2; AAK29625, 3; AAK28488 and 5; AAU04980." evidence="20" ref="2 3 5">
    <original>Q</original>
    <variation>H</variation>
    <location>
        <position position="579"/>
    </location>
</feature>
<feature type="sequence conflict" description="In Ref. 2; AAK29625, 3; AAK28488 and 5; AAU04980." evidence="20" ref="2 3 5">
    <original>T</original>
    <variation>A</variation>
    <location>
        <position position="867"/>
    </location>
</feature>
<feature type="sequence conflict" description="In Ref. 3; AAK28488." evidence="20" ref="3">
    <original>E</original>
    <variation>G</variation>
    <location>
        <position position="897"/>
    </location>
</feature>
<feature type="turn" evidence="25">
    <location>
        <begin position="31"/>
        <end position="34"/>
    </location>
</feature>
<feature type="strand" evidence="25">
    <location>
        <begin position="35"/>
        <end position="38"/>
    </location>
</feature>
<feature type="turn" evidence="25">
    <location>
        <begin position="39"/>
        <end position="41"/>
    </location>
</feature>
<feature type="strand" evidence="25">
    <location>
        <begin position="42"/>
        <end position="44"/>
    </location>
</feature>
<feature type="strand" evidence="25">
    <location>
        <begin position="67"/>
        <end position="69"/>
    </location>
</feature>
<feature type="turn" evidence="25">
    <location>
        <begin position="80"/>
        <end position="83"/>
    </location>
</feature>
<feature type="helix" evidence="25">
    <location>
        <begin position="84"/>
        <end position="86"/>
    </location>
</feature>
<feature type="strand" evidence="25">
    <location>
        <begin position="90"/>
        <end position="93"/>
    </location>
</feature>
<feature type="strand" evidence="27">
    <location>
        <begin position="100"/>
        <end position="102"/>
    </location>
</feature>
<feature type="turn" evidence="25">
    <location>
        <begin position="116"/>
        <end position="121"/>
    </location>
</feature>
<feature type="strand" evidence="25">
    <location>
        <begin position="127"/>
        <end position="129"/>
    </location>
</feature>
<feature type="strand" evidence="25">
    <location>
        <begin position="147"/>
        <end position="149"/>
    </location>
</feature>
<feature type="helix" evidence="25">
    <location>
        <begin position="160"/>
        <end position="163"/>
    </location>
</feature>
<feature type="strand" evidence="25">
    <location>
        <begin position="171"/>
        <end position="173"/>
    </location>
</feature>
<feature type="strand" evidence="25">
    <location>
        <begin position="177"/>
        <end position="179"/>
    </location>
</feature>
<feature type="turn" evidence="25">
    <location>
        <begin position="192"/>
        <end position="197"/>
    </location>
</feature>
<feature type="strand" evidence="25">
    <location>
        <begin position="203"/>
        <end position="205"/>
    </location>
</feature>
<feature type="strand" evidence="25">
    <location>
        <begin position="223"/>
        <end position="226"/>
    </location>
</feature>
<feature type="helix" evidence="25">
    <location>
        <begin position="237"/>
        <end position="239"/>
    </location>
</feature>
<feature type="strand" evidence="25">
    <location>
        <begin position="247"/>
        <end position="250"/>
    </location>
</feature>
<feature type="strand" evidence="25">
    <location>
        <begin position="254"/>
        <end position="256"/>
    </location>
</feature>
<feature type="helix" evidence="28">
    <location>
        <begin position="258"/>
        <end position="260"/>
    </location>
</feature>
<feature type="strand" evidence="25">
    <location>
        <begin position="269"/>
        <end position="272"/>
    </location>
</feature>
<feature type="turn" evidence="25">
    <location>
        <begin position="277"/>
        <end position="282"/>
    </location>
</feature>
<feature type="strand" evidence="25">
    <location>
        <begin position="288"/>
        <end position="290"/>
    </location>
</feature>
<feature type="helix" evidence="25">
    <location>
        <begin position="301"/>
        <end position="304"/>
    </location>
</feature>
<feature type="strand" evidence="25">
    <location>
        <begin position="312"/>
        <end position="314"/>
    </location>
</feature>
<feature type="strand" evidence="25">
    <location>
        <begin position="317"/>
        <end position="319"/>
    </location>
</feature>
<feature type="helix" evidence="25">
    <location>
        <begin position="321"/>
        <end position="324"/>
    </location>
</feature>
<feature type="helix" evidence="27">
    <location>
        <begin position="329"/>
        <end position="332"/>
    </location>
</feature>
<feature type="strand" evidence="25">
    <location>
        <begin position="338"/>
        <end position="340"/>
    </location>
</feature>
<feature type="strand" evidence="25">
    <location>
        <begin position="347"/>
        <end position="349"/>
    </location>
</feature>
<feature type="helix" evidence="25">
    <location>
        <begin position="358"/>
        <end position="362"/>
    </location>
</feature>
<feature type="strand" evidence="25">
    <location>
        <begin position="368"/>
        <end position="370"/>
    </location>
</feature>
<feature type="strand" evidence="25">
    <location>
        <begin position="377"/>
        <end position="379"/>
    </location>
</feature>
<feature type="turn" evidence="25">
    <location>
        <begin position="381"/>
        <end position="384"/>
    </location>
</feature>
<feature type="helix" evidence="25">
    <location>
        <begin position="385"/>
        <end position="387"/>
    </location>
</feature>
<feature type="strand" evidence="25">
    <location>
        <begin position="395"/>
        <end position="397"/>
    </location>
</feature>
<feature type="helix" evidence="25">
    <location>
        <begin position="408"/>
        <end position="412"/>
    </location>
</feature>
<feature type="strand" evidence="27">
    <location>
        <begin position="413"/>
        <end position="416"/>
    </location>
</feature>
<feature type="strand" evidence="25">
    <location>
        <begin position="419"/>
        <end position="421"/>
    </location>
</feature>
<feature type="helix" evidence="28">
    <location>
        <begin position="467"/>
        <end position="471"/>
    </location>
</feature>
<feature type="strand" evidence="25">
    <location>
        <begin position="473"/>
        <end position="475"/>
    </location>
</feature>
<feature type="strand" evidence="25">
    <location>
        <begin position="477"/>
        <end position="479"/>
    </location>
</feature>
<feature type="helix" evidence="25">
    <location>
        <begin position="490"/>
        <end position="493"/>
    </location>
</feature>
<feature type="strand" evidence="25">
    <location>
        <begin position="501"/>
        <end position="503"/>
    </location>
</feature>
<feature type="turn" evidence="26">
    <location>
        <begin position="517"/>
        <end position="520"/>
    </location>
</feature>
<feature type="strand" evidence="25">
    <location>
        <begin position="526"/>
        <end position="528"/>
    </location>
</feature>
<feature type="turn" evidence="25">
    <location>
        <begin position="539"/>
        <end position="544"/>
    </location>
</feature>
<feature type="strand" evidence="25">
    <location>
        <begin position="550"/>
        <end position="552"/>
    </location>
</feature>
<feature type="helix" evidence="28">
    <location>
        <begin position="558"/>
        <end position="561"/>
    </location>
</feature>
<feature type="helix" evidence="25">
    <location>
        <begin position="570"/>
        <end position="574"/>
    </location>
</feature>
<feature type="strand" evidence="25">
    <location>
        <begin position="580"/>
        <end position="582"/>
    </location>
</feature>
<feature type="strand" evidence="28">
    <location>
        <begin position="590"/>
        <end position="592"/>
    </location>
</feature>
<feature type="strand" evidence="25">
    <location>
        <begin position="597"/>
        <end position="600"/>
    </location>
</feature>
<feature type="strand" evidence="25">
    <location>
        <begin position="603"/>
        <end position="605"/>
    </location>
</feature>
<feature type="helix" evidence="25">
    <location>
        <begin position="611"/>
        <end position="615"/>
    </location>
</feature>
<feature type="turn" evidence="25">
    <location>
        <begin position="620"/>
        <end position="626"/>
    </location>
</feature>
<feature type="strand" evidence="25">
    <location>
        <begin position="633"/>
        <end position="635"/>
    </location>
</feature>
<feature type="helix" evidence="25">
    <location>
        <begin position="646"/>
        <end position="650"/>
    </location>
</feature>
<feature type="strand" evidence="25">
    <location>
        <begin position="658"/>
        <end position="660"/>
    </location>
</feature>
<feature type="helix" evidence="25">
    <location>
        <begin position="671"/>
        <end position="676"/>
    </location>
</feature>
<feature type="strand" evidence="25">
    <location>
        <begin position="682"/>
        <end position="684"/>
    </location>
</feature>
<feature type="strand" evidence="25">
    <location>
        <begin position="706"/>
        <end position="708"/>
    </location>
</feature>
<feature type="turn" evidence="25">
    <location>
        <begin position="719"/>
        <end position="724"/>
    </location>
</feature>
<feature type="strand" evidence="25">
    <location>
        <begin position="730"/>
        <end position="732"/>
    </location>
</feature>
<feature type="helix" evidence="25">
    <location>
        <begin position="743"/>
        <end position="745"/>
    </location>
</feature>
<feature type="helix" evidence="25">
    <location>
        <begin position="747"/>
        <end position="751"/>
    </location>
</feature>
<feature type="strand" evidence="25">
    <location>
        <begin position="754"/>
        <end position="757"/>
    </location>
</feature>
<feature type="helix" evidence="25">
    <location>
        <begin position="771"/>
        <end position="777"/>
    </location>
</feature>
<feature type="helix" evidence="25">
    <location>
        <begin position="779"/>
        <end position="781"/>
    </location>
</feature>
<feature type="turn" evidence="25">
    <location>
        <begin position="783"/>
        <end position="788"/>
    </location>
</feature>
<feature type="strand" evidence="25">
    <location>
        <begin position="789"/>
        <end position="794"/>
    </location>
</feature>
<feature type="turn" evidence="25">
    <location>
        <begin position="795"/>
        <end position="797"/>
    </location>
</feature>
<feature type="helix" evidence="25">
    <location>
        <begin position="807"/>
        <end position="809"/>
    </location>
</feature>